<sequence length="131" mass="14343">MDQGGRGVGAEHGKYRGVRRRPWGKYAAEIRDSRKHGERVWLGTFDTAEEAARAYDQAAYSMRGQAAILNFPHEYNMGSGVSSSTAMAGSSSASASASSSSRQVFEFEYLDDSVLEELLEEGEKPNKGKKK</sequence>
<name>ERF96_ARATH</name>
<keyword id="KW-0002">3D-structure</keyword>
<keyword id="KW-0010">Activator</keyword>
<keyword id="KW-0238">DNA-binding</keyword>
<keyword id="KW-0936">Ethylene signaling pathway</keyword>
<keyword id="KW-0539">Nucleus</keyword>
<keyword id="KW-1185">Reference proteome</keyword>
<keyword id="KW-0804">Transcription</keyword>
<keyword id="KW-0805">Transcription regulation</keyword>
<organism>
    <name type="scientific">Arabidopsis thaliana</name>
    <name type="common">Mouse-ear cress</name>
    <dbReference type="NCBI Taxonomy" id="3702"/>
    <lineage>
        <taxon>Eukaryota</taxon>
        <taxon>Viridiplantae</taxon>
        <taxon>Streptophyta</taxon>
        <taxon>Embryophyta</taxon>
        <taxon>Tracheophyta</taxon>
        <taxon>Spermatophyta</taxon>
        <taxon>Magnoliopsida</taxon>
        <taxon>eudicotyledons</taxon>
        <taxon>Gunneridae</taxon>
        <taxon>Pentapetalae</taxon>
        <taxon>rosids</taxon>
        <taxon>malvids</taxon>
        <taxon>Brassicales</taxon>
        <taxon>Brassicaceae</taxon>
        <taxon>Camelineae</taxon>
        <taxon>Arabidopsis</taxon>
    </lineage>
</organism>
<dbReference type="EMBL" id="AY560864">
    <property type="protein sequence ID" value="AAT44931.1"/>
    <property type="molecule type" value="mRNA"/>
</dbReference>
<dbReference type="EMBL" id="AB025638">
    <property type="protein sequence ID" value="BAA97420.1"/>
    <property type="molecule type" value="Genomic_DNA"/>
</dbReference>
<dbReference type="EMBL" id="CP002688">
    <property type="protein sequence ID" value="AED94958.1"/>
    <property type="molecule type" value="Genomic_DNA"/>
</dbReference>
<dbReference type="EMBL" id="DQ447034">
    <property type="protein sequence ID" value="ABE66217.1"/>
    <property type="molecule type" value="mRNA"/>
</dbReference>
<dbReference type="EMBL" id="DQ653344">
    <property type="protein sequence ID" value="ABK28740.1"/>
    <property type="status" value="ALT_SEQ"/>
    <property type="molecule type" value="mRNA"/>
</dbReference>
<dbReference type="RefSeq" id="NP_199154.1">
    <property type="nucleotide sequence ID" value="NM_123707.1"/>
</dbReference>
<dbReference type="PDB" id="5WX9">
    <property type="method" value="X-ray"/>
    <property type="resolution" value="1.76 A"/>
    <property type="chains" value="A=1-131"/>
</dbReference>
<dbReference type="PDBsum" id="5WX9"/>
<dbReference type="SMR" id="Q9LSX0"/>
<dbReference type="FunCoup" id="Q9LSX0">
    <property type="interactions" value="15"/>
</dbReference>
<dbReference type="STRING" id="3702.Q9LSX0"/>
<dbReference type="PaxDb" id="3702-AT5G43410.1"/>
<dbReference type="ProteomicsDB" id="220687"/>
<dbReference type="EnsemblPlants" id="AT5G43410.1">
    <property type="protein sequence ID" value="AT5G43410.1"/>
    <property type="gene ID" value="AT5G43410"/>
</dbReference>
<dbReference type="GeneID" id="834360"/>
<dbReference type="Gramene" id="AT5G43410.1">
    <property type="protein sequence ID" value="AT5G43410.1"/>
    <property type="gene ID" value="AT5G43410"/>
</dbReference>
<dbReference type="KEGG" id="ath:AT5G43410"/>
<dbReference type="Araport" id="AT5G43410"/>
<dbReference type="TAIR" id="AT5G43410">
    <property type="gene designation" value="ERF96"/>
</dbReference>
<dbReference type="eggNOG" id="ENOG502S124">
    <property type="taxonomic scope" value="Eukaryota"/>
</dbReference>
<dbReference type="HOGENOM" id="CLU_058713_5_0_1"/>
<dbReference type="InParanoid" id="Q9LSX0"/>
<dbReference type="OMA" id="FEFEYFD"/>
<dbReference type="PhylomeDB" id="Q9LSX0"/>
<dbReference type="PRO" id="PR:Q9LSX0"/>
<dbReference type="Proteomes" id="UP000006548">
    <property type="component" value="Chromosome 5"/>
</dbReference>
<dbReference type="ExpressionAtlas" id="Q9LSX0">
    <property type="expression patterns" value="baseline and differential"/>
</dbReference>
<dbReference type="GO" id="GO:0005634">
    <property type="term" value="C:nucleus"/>
    <property type="evidence" value="ECO:0000314"/>
    <property type="project" value="TAIR"/>
</dbReference>
<dbReference type="GO" id="GO:0003700">
    <property type="term" value="F:DNA-binding transcription factor activity"/>
    <property type="evidence" value="ECO:0000314"/>
    <property type="project" value="TAIR"/>
</dbReference>
<dbReference type="GO" id="GO:0043565">
    <property type="term" value="F:sequence-specific DNA binding"/>
    <property type="evidence" value="ECO:0000314"/>
    <property type="project" value="TAIR"/>
</dbReference>
<dbReference type="GO" id="GO:0009873">
    <property type="term" value="P:ethylene-activated signaling pathway"/>
    <property type="evidence" value="ECO:0007669"/>
    <property type="project" value="UniProtKB-KW"/>
</dbReference>
<dbReference type="GO" id="GO:0009789">
    <property type="term" value="P:positive regulation of abscisic acid-activated signaling pathway"/>
    <property type="evidence" value="ECO:0000315"/>
    <property type="project" value="TAIR"/>
</dbReference>
<dbReference type="GO" id="GO:0010186">
    <property type="term" value="P:positive regulation of cellular defense response"/>
    <property type="evidence" value="ECO:0000315"/>
    <property type="project" value="TAIR"/>
</dbReference>
<dbReference type="GO" id="GO:0045893">
    <property type="term" value="P:positive regulation of DNA-templated transcription"/>
    <property type="evidence" value="ECO:0000314"/>
    <property type="project" value="TAIR"/>
</dbReference>
<dbReference type="GO" id="GO:0090332">
    <property type="term" value="P:stomatal closure"/>
    <property type="evidence" value="ECO:0000315"/>
    <property type="project" value="TAIR"/>
</dbReference>
<dbReference type="CDD" id="cd00018">
    <property type="entry name" value="AP2"/>
    <property type="match status" value="1"/>
</dbReference>
<dbReference type="FunFam" id="3.30.730.10:FF:000001">
    <property type="entry name" value="Ethylene-responsive transcription factor 2"/>
    <property type="match status" value="1"/>
</dbReference>
<dbReference type="Gene3D" id="3.30.730.10">
    <property type="entry name" value="AP2/ERF domain"/>
    <property type="match status" value="1"/>
</dbReference>
<dbReference type="InterPro" id="IPR001471">
    <property type="entry name" value="AP2/ERF_dom"/>
</dbReference>
<dbReference type="InterPro" id="IPR036955">
    <property type="entry name" value="AP2/ERF_dom_sf"/>
</dbReference>
<dbReference type="InterPro" id="IPR016177">
    <property type="entry name" value="DNA-bd_dom_sf"/>
</dbReference>
<dbReference type="InterPro" id="IPR044808">
    <property type="entry name" value="ERF_plant"/>
</dbReference>
<dbReference type="PANTHER" id="PTHR31190">
    <property type="entry name" value="DNA-BINDING DOMAIN"/>
    <property type="match status" value="1"/>
</dbReference>
<dbReference type="PANTHER" id="PTHR31190:SF488">
    <property type="entry name" value="ETHYLENE-RESPONSIVE TRANSCRIPTION FACTOR ERF096"/>
    <property type="match status" value="1"/>
</dbReference>
<dbReference type="Pfam" id="PF00847">
    <property type="entry name" value="AP2"/>
    <property type="match status" value="1"/>
</dbReference>
<dbReference type="PRINTS" id="PR00367">
    <property type="entry name" value="ETHRSPELEMNT"/>
</dbReference>
<dbReference type="SMART" id="SM00380">
    <property type="entry name" value="AP2"/>
    <property type="match status" value="1"/>
</dbReference>
<dbReference type="SUPFAM" id="SSF54171">
    <property type="entry name" value="DNA-binding domain"/>
    <property type="match status" value="1"/>
</dbReference>
<dbReference type="PROSITE" id="PS51032">
    <property type="entry name" value="AP2_ERF"/>
    <property type="match status" value="1"/>
</dbReference>
<comment type="function">
    <text evidence="1">Probably acts as a transcriptional activator. Binds to the GCC-box pathogenesis-related promoter element. May be involved in the regulation of gene expression by stress factors and by components of stress signal transduction pathways (By similarity).</text>
</comment>
<comment type="subcellular location">
    <subcellularLocation>
        <location evidence="4">Nucleus</location>
    </subcellularLocation>
</comment>
<comment type="similarity">
    <text evidence="4">Belongs to the AP2/ERF transcription factor family. ERF subfamily.</text>
</comment>
<comment type="sequence caution" evidence="4">
    <conflict type="erroneous termination">
        <sequence resource="EMBL-CDS" id="ABK28740"/>
    </conflict>
    <text>Extended C-terminus.</text>
</comment>
<protein>
    <recommendedName>
        <fullName>Ethylene-responsive transcription factor ERF096</fullName>
    </recommendedName>
</protein>
<feature type="chain" id="PRO_0000290415" description="Ethylene-responsive transcription factor ERF096">
    <location>
        <begin position="1"/>
        <end position="131"/>
    </location>
</feature>
<feature type="DNA-binding region" description="AP2/ERF" evidence="2">
    <location>
        <begin position="14"/>
        <end position="72"/>
    </location>
</feature>
<feature type="region of interest" description="Disordered" evidence="3">
    <location>
        <begin position="80"/>
        <end position="103"/>
    </location>
</feature>
<feature type="compositionally biased region" description="Low complexity" evidence="3">
    <location>
        <begin position="80"/>
        <end position="101"/>
    </location>
</feature>
<feature type="sequence conflict" description="In Ref. 1; AAT44931." evidence="4" ref="1">
    <original>V</original>
    <variation>G</variation>
    <location>
        <position position="81"/>
    </location>
</feature>
<feature type="sequence conflict" description="In Ref. 1; AAT44931." evidence="4" ref="1">
    <original>A</original>
    <variation>S</variation>
    <location>
        <position position="93"/>
    </location>
</feature>
<feature type="helix" evidence="5">
    <location>
        <begin position="2"/>
        <end position="9"/>
    </location>
</feature>
<feature type="strand" evidence="5">
    <location>
        <begin position="26"/>
        <end position="31"/>
    </location>
</feature>
<feature type="turn" evidence="5">
    <location>
        <begin position="33"/>
        <end position="36"/>
    </location>
</feature>
<feature type="strand" evidence="5">
    <location>
        <begin position="39"/>
        <end position="46"/>
    </location>
</feature>
<feature type="helix" evidence="5">
    <location>
        <begin position="51"/>
        <end position="63"/>
    </location>
</feature>
<feature type="helix" evidence="5">
    <location>
        <begin position="84"/>
        <end position="91"/>
    </location>
</feature>
<feature type="turn" evidence="5">
    <location>
        <begin position="97"/>
        <end position="99"/>
    </location>
</feature>
<feature type="helix" evidence="5">
    <location>
        <begin position="100"/>
        <end position="102"/>
    </location>
</feature>
<feature type="helix" evidence="5">
    <location>
        <begin position="105"/>
        <end position="111"/>
    </location>
</feature>
<accession>Q9LSX0</accession>
<accession>A0MFL8</accession>
<accession>Q6J9R1</accession>
<evidence type="ECO:0000250" key="1"/>
<evidence type="ECO:0000255" key="2">
    <source>
        <dbReference type="PROSITE-ProRule" id="PRU00366"/>
    </source>
</evidence>
<evidence type="ECO:0000256" key="3">
    <source>
        <dbReference type="SAM" id="MobiDB-lite"/>
    </source>
</evidence>
<evidence type="ECO:0000305" key="4"/>
<evidence type="ECO:0007829" key="5">
    <source>
        <dbReference type="PDB" id="5WX9"/>
    </source>
</evidence>
<proteinExistence type="evidence at protein level"/>
<gene>
    <name type="primary">ERF096</name>
    <name type="ordered locus">At5g43410</name>
    <name type="ORF">MWF20.11</name>
</gene>
<reference key="1">
    <citation type="submission" date="2004-02" db="EMBL/GenBank/DDBJ databases">
        <title>Molecular cloning, expression, phylogenetic and functional characterization of the Arabidopsis AP2/EREBP transcription factor family.</title>
        <authorList>
            <person name="Pan Y."/>
            <person name="Gong W."/>
            <person name="Liu D."/>
            <person name="Fu Q."/>
            <person name="Mei W.-Q."/>
            <person name="Song W.-Q."/>
            <person name="Ma L.-G."/>
            <person name="Luo J.-C."/>
            <person name="Deng X.-W."/>
            <person name="Zhu Y.-X."/>
        </authorList>
    </citation>
    <scope>NUCLEOTIDE SEQUENCE [MRNA]</scope>
</reference>
<reference key="2">
    <citation type="journal article" date="2000" name="DNA Res.">
        <title>Structural analysis of Arabidopsis thaliana chromosome 5. X. Sequence features of the regions of 3,076,755 bp covered by sixty P1 and TAC clones.</title>
        <authorList>
            <person name="Sato S."/>
            <person name="Nakamura Y."/>
            <person name="Kaneko T."/>
            <person name="Katoh T."/>
            <person name="Asamizu E."/>
            <person name="Kotani H."/>
            <person name="Tabata S."/>
        </authorList>
    </citation>
    <scope>NUCLEOTIDE SEQUENCE [LARGE SCALE GENOMIC DNA]</scope>
    <source>
        <strain>cv. Columbia</strain>
    </source>
</reference>
<reference key="3">
    <citation type="journal article" date="2017" name="Plant J.">
        <title>Araport11: a complete reannotation of the Arabidopsis thaliana reference genome.</title>
        <authorList>
            <person name="Cheng C.Y."/>
            <person name="Krishnakumar V."/>
            <person name="Chan A.P."/>
            <person name="Thibaud-Nissen F."/>
            <person name="Schobel S."/>
            <person name="Town C.D."/>
        </authorList>
    </citation>
    <scope>GENOME REANNOTATION</scope>
    <source>
        <strain>cv. Columbia</strain>
    </source>
</reference>
<reference key="4">
    <citation type="journal article" date="2006" name="Plant Biotechnol. J.">
        <title>Simultaneous high-throughput recombinational cloning of open reading frames in closed and open configurations.</title>
        <authorList>
            <person name="Underwood B.A."/>
            <person name="Vanderhaeghen R."/>
            <person name="Whitford R."/>
            <person name="Town C.D."/>
            <person name="Hilson P."/>
        </authorList>
    </citation>
    <scope>NUCLEOTIDE SEQUENCE [LARGE SCALE MRNA]</scope>
    <source>
        <strain>cv. Columbia</strain>
    </source>
</reference>
<reference key="5">
    <citation type="journal article" date="2006" name="Plant Physiol.">
        <title>Genome-wide analysis of the ERF gene family in Arabidopsis and rice.</title>
        <authorList>
            <person name="Nakano T."/>
            <person name="Suzuki K."/>
            <person name="Fujimura T."/>
            <person name="Shinshi H."/>
        </authorList>
    </citation>
    <scope>GENE FAMILY</scope>
    <scope>NOMENCLATURE</scope>
</reference>